<comment type="function">
    <text evidence="2 6 7 8 9 10 11 12 13 14">Negative regulator of cell proliferation in the adaxial side of leaves. Regulates the formation of a symmetric lamina and the establishment of venation. Positively regulates LATERAL ORGAN BOUNDARIES (LOB) within the shoot apex, and the class III HD-ZIP genes REV, PHB, and PHV. Interacts directly with ASYMMETRIC LEAVES 1 (AS1) to repress the knox homeobox genes KNAT1, KNAT2, and KNAT6 and the abaxial determinants ARF3, KAN2 and YAB5. May act in parallel with the RDR6-SGS3-AGO7 pathway, an endogenous RNA silencing pathway, to regulate the leaf morphogenesis (PubMed:11311158, PubMed:12787254, PubMed:12874130, PubMed:14508003, PubMed:16006579, PubMed:16699177, PubMed:17395603, PubMed:17559509). Required for the binding of AS1 to the KNOX genes (PubMed:23271976). Involved in leaf polarity establishment by functioning cooperatively with RH10 or RID2 to repress abaxial genes ARF3, ARF4, KAN1, KAN2, YAB1 and YAB5, and the knox homeobox genes KNAT1, KNAT2, KNAT6, and STM to promote adaxial development in leaf primordia at shoot apical meristems at high temperatures (PubMed:27334696).</text>
</comment>
<comment type="subunit">
    <text evidence="7 13 15">Homo- and heterodimer with AS1 (PubMed:23271976). Interacts with AS1 (PubMed:12874130, PubMed:23271976). Part of the AS1 repressor complex composed of AS1, LBD6/AS2 and HDA6 (PubMed:12874130, PubMed:23271976). Interacts with LFR (PubMed:29775508).</text>
</comment>
<comment type="interaction">
    <interactant intactId="EBI-4443304">
        <id>O04479</id>
    </interactant>
    <interactant intactId="EBI-763232">
        <id>O80931</id>
        <label>AS1</label>
    </interactant>
    <organismsDiffer>false</organismsDiffer>
    <experiments>6</experiments>
</comment>
<comment type="subcellular location">
    <subcellularLocation>
        <location evidence="4 13">Nucleus</location>
    </subcellularLocation>
</comment>
<comment type="tissue specificity">
    <text evidence="4 5 12">Expressed in young shoots, roots, stems, leaves, flowers and adaxial domains of cotyledonary and leaves primordia.</text>
</comment>
<comment type="induction">
    <text evidence="3">Negatively regulated by SHOOT MERISTEMLESS (STM).</text>
</comment>
<comment type="disruption phenotype">
    <text evidence="14">Plants are indistinguishable from that of wild-type at 16 degrees Celsius, however they generate a weak phenotype of pointed leaves at 22 degrees Celsius which become narrower at 26 degrees Celsius. In the leaves of plants grown at 26 degrees Celsius, the xylems are located on the adaxial sides and the phloems are on the abaxial sides, similar to those in the wild-type. Plants with double mutations in this protein and in RH10 or AS1 protein have abaxialized filamentous and trumpet-like leaves with loss of the adaxial domain at high temperatures. In double mutants, shapes of epidermal cells of the filamentous leaves are simple and rectangular, similar to those of a petiole, but different from those of flat leaves of wild-type plants. The filamentous leaves of the double mutant at 26 degrees Celsius show primitive or no vascular tissue without apparent xylem cells inside the bundle sheath, suggesting defects in differentiation of xylem cells on the adaxial side.</text>
</comment>
<comment type="miscellaneous">
    <text>Gain-of-function mutants iso1-D and iso-2D (T-DNA tagging) show completely curled up hyponastic rosette leaves.</text>
</comment>
<comment type="similarity">
    <text evidence="18">Belongs to the LOB domain-containing protein family.</text>
</comment>
<feature type="chain" id="PRO_0000132257" description="Protein ASYMMETRIC LEAVES 2">
    <location>
        <begin position="1"/>
        <end position="199"/>
    </location>
</feature>
<feature type="domain" description="LOB" evidence="1">
    <location>
        <begin position="8"/>
        <end position="109"/>
    </location>
</feature>
<gene>
    <name evidence="16" type="primary">AS2</name>
    <name evidence="17" type="synonym">LBD6</name>
    <name evidence="19" type="ordered locus">At1g65620</name>
    <name evidence="20" type="ORF">F5I14.15</name>
</gene>
<evidence type="ECO:0000255" key="1">
    <source>
        <dbReference type="PROSITE-ProRule" id="PRU00291"/>
    </source>
</evidence>
<evidence type="ECO:0000269" key="2">
    <source>
    </source>
</evidence>
<evidence type="ECO:0000269" key="3">
    <source>
    </source>
</evidence>
<evidence type="ECO:0000269" key="4">
    <source>
    </source>
</evidence>
<evidence type="ECO:0000269" key="5">
    <source>
    </source>
</evidence>
<evidence type="ECO:0000269" key="6">
    <source>
    </source>
</evidence>
<evidence type="ECO:0000269" key="7">
    <source>
    </source>
</evidence>
<evidence type="ECO:0000269" key="8">
    <source>
    </source>
</evidence>
<evidence type="ECO:0000269" key="9">
    <source>
    </source>
</evidence>
<evidence type="ECO:0000269" key="10">
    <source>
    </source>
</evidence>
<evidence type="ECO:0000269" key="11">
    <source>
    </source>
</evidence>
<evidence type="ECO:0000269" key="12">
    <source>
    </source>
</evidence>
<evidence type="ECO:0000269" key="13">
    <source>
    </source>
</evidence>
<evidence type="ECO:0000269" key="14">
    <source>
    </source>
</evidence>
<evidence type="ECO:0000269" key="15">
    <source>
    </source>
</evidence>
<evidence type="ECO:0000303" key="16">
    <source>
    </source>
</evidence>
<evidence type="ECO:0000303" key="17">
    <source>
    </source>
</evidence>
<evidence type="ECO:0000305" key="18"/>
<evidence type="ECO:0000312" key="19">
    <source>
        <dbReference type="Araport" id="AT1G65620"/>
    </source>
</evidence>
<evidence type="ECO:0000312" key="20">
    <source>
        <dbReference type="EMBL" id="AAB60912.1"/>
    </source>
</evidence>
<name>AS2_ARATH</name>
<sequence>MASSSTNSPCAACKFLRRKCQPECVFAPYFPPDQPQKFANVHKVFGASNVTKLLNELHPSQREDAVNSLAYEADMRLRDPVYGCVGVISLLQHQLRQLQIDLSCAKSELSKYQSLGILAATHQSLGINLLAGAADGTATAVRDHYHHHQFFPREQMFGGLDVPAGNNYDGGILAIGQITQFQQPRAAAGDDGRRTVDPS</sequence>
<accession>O04479</accession>
<accession>B7XG54</accession>
<accession>Q53YQ2</accession>
<reference key="1">
    <citation type="journal article" date="2002" name="Plant Physiol.">
        <title>The LATERAL ORGAN BOUNDARIES gene defines a novel, plant-specific gene family.</title>
        <authorList>
            <person name="Shuai B."/>
            <person name="Reynaga-Pena C.G."/>
            <person name="Springer P.S."/>
        </authorList>
    </citation>
    <scope>NUCLEOTIDE SEQUENCE [MRNA]</scope>
    <scope>TISSUE SPECIFICITY</scope>
    <scope>GENE FAMILY</scope>
    <scope>NOMENCLATURE</scope>
    <source>
        <strain>cv. Columbia</strain>
    </source>
</reference>
<reference key="2">
    <citation type="journal article" date="2002" name="Plant Cell Physiol.">
        <title>The ASYMMETRIC LEAVES2 gene of Arabidopsis thaliana, required for formation of a symmetric flat leaf lamina, encodes a member of a novel family of proteins characterized by cysteine repeats and a leucine zipper.</title>
        <authorList>
            <person name="Iwakawa H."/>
            <person name="Ueno Y."/>
            <person name="Semiarti E."/>
            <person name="Onouchi H."/>
            <person name="Kojima S."/>
            <person name="Tsukaya H."/>
            <person name="Hasebe M."/>
            <person name="Soma T."/>
            <person name="Ikezaki M."/>
            <person name="Machida C."/>
            <person name="Machida Y."/>
        </authorList>
    </citation>
    <scope>NUCLEOTIDE SEQUENCE [MRNA]</scope>
    <scope>TISSUE SPECIFICITY</scope>
    <scope>SUBCELLULAR LOCATION</scope>
    <scope>GENE FAMILY</scope>
    <scope>NOMENCLATURE</scope>
    <source>
        <strain>cv. Columbia</strain>
    </source>
</reference>
<reference key="3">
    <citation type="journal article" date="2009" name="Plant J.">
        <title>Characterization of genes in the ASYMMETRIC LEAVES2/LATERAL ORGAN BOUNDARIES (AS2/LOB) family in Arabidopsis thaliana, and functional and molecular comparisons between AS2 and other family members.</title>
        <authorList>
            <person name="Matsumura Y."/>
            <person name="Iwakawa H."/>
            <person name="Machida Y."/>
            <person name="Machida C."/>
        </authorList>
    </citation>
    <scope>NUCLEOTIDE SEQUENCE [MRNA]</scope>
    <source>
        <strain>cv. Columbia</strain>
    </source>
</reference>
<reference key="4">
    <citation type="submission" date="2004-01" db="EMBL/GenBank/DDBJ databases">
        <title>Gene AS2 from ecotype Blanes Arabidopsis thaliana.</title>
        <authorList>
            <person name="Lebedeva O.V."/>
            <person name="Ezhova T.A."/>
        </authorList>
    </citation>
    <scope>NUCLEOTIDE SEQUENCE [GENOMIC DNA]</scope>
    <source>
        <strain>cv. Bla-1</strain>
    </source>
</reference>
<reference key="5">
    <citation type="journal article" date="2000" name="Nature">
        <title>Sequence and analysis of chromosome 1 of the plant Arabidopsis thaliana.</title>
        <authorList>
            <person name="Theologis A."/>
            <person name="Ecker J.R."/>
            <person name="Palm C.J."/>
            <person name="Federspiel N.A."/>
            <person name="Kaul S."/>
            <person name="White O."/>
            <person name="Alonso J."/>
            <person name="Altafi H."/>
            <person name="Araujo R."/>
            <person name="Bowman C.L."/>
            <person name="Brooks S.Y."/>
            <person name="Buehler E."/>
            <person name="Chan A."/>
            <person name="Chao Q."/>
            <person name="Chen H."/>
            <person name="Cheuk R.F."/>
            <person name="Chin C.W."/>
            <person name="Chung M.K."/>
            <person name="Conn L."/>
            <person name="Conway A.B."/>
            <person name="Conway A.R."/>
            <person name="Creasy T.H."/>
            <person name="Dewar K."/>
            <person name="Dunn P."/>
            <person name="Etgu P."/>
            <person name="Feldblyum T.V."/>
            <person name="Feng J.-D."/>
            <person name="Fong B."/>
            <person name="Fujii C.Y."/>
            <person name="Gill J.E."/>
            <person name="Goldsmith A.D."/>
            <person name="Haas B."/>
            <person name="Hansen N.F."/>
            <person name="Hughes B."/>
            <person name="Huizar L."/>
            <person name="Hunter J.L."/>
            <person name="Jenkins J."/>
            <person name="Johnson-Hopson C."/>
            <person name="Khan S."/>
            <person name="Khaykin E."/>
            <person name="Kim C.J."/>
            <person name="Koo H.L."/>
            <person name="Kremenetskaia I."/>
            <person name="Kurtz D.B."/>
            <person name="Kwan A."/>
            <person name="Lam B."/>
            <person name="Langin-Hooper S."/>
            <person name="Lee A."/>
            <person name="Lee J.M."/>
            <person name="Lenz C.A."/>
            <person name="Li J.H."/>
            <person name="Li Y.-P."/>
            <person name="Lin X."/>
            <person name="Liu S.X."/>
            <person name="Liu Z.A."/>
            <person name="Luros J.S."/>
            <person name="Maiti R."/>
            <person name="Marziali A."/>
            <person name="Militscher J."/>
            <person name="Miranda M."/>
            <person name="Nguyen M."/>
            <person name="Nierman W.C."/>
            <person name="Osborne B.I."/>
            <person name="Pai G."/>
            <person name="Peterson J."/>
            <person name="Pham P.K."/>
            <person name="Rizzo M."/>
            <person name="Rooney T."/>
            <person name="Rowley D."/>
            <person name="Sakano H."/>
            <person name="Salzberg S.L."/>
            <person name="Schwartz J.R."/>
            <person name="Shinn P."/>
            <person name="Southwick A.M."/>
            <person name="Sun H."/>
            <person name="Tallon L.J."/>
            <person name="Tambunga G."/>
            <person name="Toriumi M.J."/>
            <person name="Town C.D."/>
            <person name="Utterback T."/>
            <person name="Van Aken S."/>
            <person name="Vaysberg M."/>
            <person name="Vysotskaia V.S."/>
            <person name="Walker M."/>
            <person name="Wu D."/>
            <person name="Yu G."/>
            <person name="Fraser C.M."/>
            <person name="Venter J.C."/>
            <person name="Davis R.W."/>
        </authorList>
    </citation>
    <scope>NUCLEOTIDE SEQUENCE [LARGE SCALE GENOMIC DNA]</scope>
    <source>
        <strain>cv. Columbia</strain>
    </source>
</reference>
<reference key="6">
    <citation type="journal article" date="2017" name="Plant J.">
        <title>Araport11: a complete reannotation of the Arabidopsis thaliana reference genome.</title>
        <authorList>
            <person name="Cheng C.Y."/>
            <person name="Krishnakumar V."/>
            <person name="Chan A.P."/>
            <person name="Thibaud-Nissen F."/>
            <person name="Schobel S."/>
            <person name="Town C.D."/>
        </authorList>
    </citation>
    <scope>GENOME REANNOTATION</scope>
    <source>
        <strain>cv. Columbia</strain>
    </source>
</reference>
<reference key="7">
    <citation type="submission" date="2006-04" db="EMBL/GenBank/DDBJ databases">
        <title>Arabidopsis ORF clones.</title>
        <authorList>
            <person name="Shinn P."/>
            <person name="Chen H."/>
            <person name="Kim C.J."/>
            <person name="Ecker J.R."/>
        </authorList>
    </citation>
    <scope>NUCLEOTIDE SEQUENCE [LARGE SCALE MRNA]</scope>
    <source>
        <strain>cv. Columbia</strain>
    </source>
</reference>
<reference key="8">
    <citation type="journal article" date="2001" name="Development">
        <title>The ASYMMETRIC LEAVES2 gene of Arabidopsis thaliana regulates formation of a symmetric lamina, establishment of venation and repression of meristem-related homeobox genes in leaves.</title>
        <authorList>
            <person name="Semiarti E."/>
            <person name="Ueno Y."/>
            <person name="Tsukaya H."/>
            <person name="Iwakawa H."/>
            <person name="Machida C."/>
            <person name="Machida Y."/>
        </authorList>
    </citation>
    <scope>FUNCTION</scope>
</reference>
<reference key="9">
    <citation type="journal article" date="2002" name="Development">
        <title>ASYMMETRIC LEAVES1 reveals knox gene redundancy in Arabidopsis.</title>
        <authorList>
            <person name="Byrne M.E."/>
            <person name="Simorowski J."/>
            <person name="Martienssen R.A."/>
        </authorList>
    </citation>
    <scope>INDUCTION</scope>
</reference>
<reference key="10">
    <citation type="journal article" date="2003" name="Development">
        <title>Novel as1 and as2 defects in leaf adaxial-abaxial polarity reveal the requirement for ASYMMETRIC LEAVES1 and 2 and ERECTA functions in specifying leaf adaxial identity.</title>
        <authorList>
            <person name="Xu L."/>
            <person name="Xu Y."/>
            <person name="Dong A."/>
            <person name="Sun Y."/>
            <person name="Pi L."/>
            <person name="Xu Y."/>
            <person name="Huang H."/>
        </authorList>
    </citation>
    <scope>FUNCTION</scope>
    <scope>INTERACTION WITH AS1</scope>
</reference>
<reference key="11">
    <citation type="journal article" date="2003" name="Plant J.">
        <title>Activation tagging, a novel tool to dissect the functions of a gene family.</title>
        <authorList>
            <person name="Nakazawa M."/>
            <person name="Ichikawa T."/>
            <person name="Ishikawa A."/>
            <person name="Kobayashi H."/>
            <person name="Tsuhara Y."/>
            <person name="Kawashima M."/>
            <person name="Suzuki K."/>
            <person name="Muto S."/>
            <person name="Matsui M."/>
        </authorList>
    </citation>
    <scope>FUNCTION</scope>
</reference>
<reference key="12">
    <citation type="journal article" date="2003" name="Plant Cell">
        <title>The Arabidopsis LATERAL ORGAN BOUNDARIES-domain gene ASYMMETRIC LEAVES2 functions in the repression of KNOX gene expression and in adaxial-abaxial patterning.</title>
        <authorList>
            <person name="Lin W.-C."/>
            <person name="Shuai B."/>
            <person name="Springer P.S."/>
        </authorList>
    </citation>
    <scope>FUNCTION</scope>
</reference>
<reference key="13">
    <citation type="journal article" date="2005" name="Plant Cell">
        <title>The Putative RNA-dependent RNA polymerase RDR6 acts synergistically with ASYMMETRIC LEAVES1 and 2 to repress BREVIPEDICELLUS and MicroRNA165/166 in Arabidopsis leaf development.</title>
        <authorList>
            <person name="Li H."/>
            <person name="Xu L."/>
            <person name="Wang H."/>
            <person name="Yuan Z."/>
            <person name="Cao X."/>
            <person name="Yang Z."/>
            <person name="Zhang D."/>
            <person name="Xu Y."/>
            <person name="Huang H."/>
        </authorList>
    </citation>
    <scope>FUNCTION</scope>
</reference>
<reference key="14">
    <citation type="journal article" date="2006" name="Plant Cell Physiol.">
        <title>Genetic interaction between the AS1-AS2 and RDR6-SGS3-AGO7 pathways for leaf morphogenesis.</title>
        <authorList>
            <person name="Xu L."/>
            <person name="Yang L."/>
            <person name="Pi L."/>
            <person name="Liu Q."/>
            <person name="Ling Q."/>
            <person name="Wang H."/>
            <person name="Poethig R.S."/>
            <person name="Huang H."/>
        </authorList>
    </citation>
    <scope>FUNCTION</scope>
</reference>
<reference key="15">
    <citation type="journal article" date="2007" name="Plant Cell Physiol.">
        <title>Genetic interactions between leaf polarity-controlling genes and ASYMMETRIC LEAVES1 and 2 in Arabidopsis leaf patterning.</title>
        <authorList>
            <person name="Fu Y."/>
            <person name="Xu L."/>
            <person name="Xu B."/>
            <person name="Yang L."/>
            <person name="Ling Q."/>
            <person name="Wang H."/>
            <person name="Huang H."/>
        </authorList>
    </citation>
    <scope>FUNCTION</scope>
</reference>
<reference key="16">
    <citation type="journal article" date="2007" name="Plant J.">
        <title>Expression of the ASYMMETRIC LEAVES2 gene in the adaxial domain of Arabidopsis leaves represses cell proliferation in this domain and is critical for the development of properly expanded leaves.</title>
        <authorList>
            <person name="Iwakawa H."/>
            <person name="Iwasaki M."/>
            <person name="Kojima S."/>
            <person name="Ueno Y."/>
            <person name="Soma T."/>
            <person name="Tanaka H."/>
            <person name="Semiarti E."/>
            <person name="Machida Y."/>
            <person name="Machida C."/>
        </authorList>
    </citation>
    <scope>FUNCTION</scope>
    <scope>TISSUE SPECIFICITY</scope>
</reference>
<reference key="17">
    <citation type="journal article" date="2012" name="PLoS Genet.">
        <title>Histone deacetylase HDA6 is functionally associated with AS1 in repression of KNOX genes in arabidopsis.</title>
        <authorList>
            <person name="Luo M."/>
            <person name="Yu C.W."/>
            <person name="Chen F.F."/>
            <person name="Zhao L."/>
            <person name="Tian G."/>
            <person name="Liu X."/>
            <person name="Cui Y."/>
            <person name="Yang J.Y."/>
            <person name="Wu K."/>
        </authorList>
    </citation>
    <scope>FUNCTION</scope>
    <scope>INTERACTION WITH AS1</scope>
    <scope>SUBCELLULAR LOCATION</scope>
</reference>
<reference key="18">
    <citation type="journal article" date="2016" name="Biol. Open">
        <title>A genetic link between epigenetic repressor AS1-AS2 and a putative small subunit processome in leaf polarity establishment of Arabidopsis.</title>
        <authorList>
            <person name="Matsumura Y."/>
            <person name="Ohbayashi I."/>
            <person name="Takahashi H."/>
            <person name="Kojima S."/>
            <person name="Ishibashi N."/>
            <person name="Keta S."/>
            <person name="Nakagawa A."/>
            <person name="Hayashi R."/>
            <person name="Saez-Vasquez J."/>
            <person name="Echeverria M."/>
            <person name="Sugiyama M."/>
            <person name="Nakamura K."/>
            <person name="Machida C."/>
            <person name="Machida Y."/>
        </authorList>
    </citation>
    <scope>FUNCTION</scope>
    <scope>DISRUPTION PHENOTYPE</scope>
</reference>
<reference key="19">
    <citation type="journal article" date="2018" name="Plant J.">
        <title>LFR is functionally associated with AS2 to mediate leaf development in Arabidopsis.</title>
        <authorList>
            <person name="Lin X."/>
            <person name="Gu D."/>
            <person name="Zhao H."/>
            <person name="Peng Y."/>
            <person name="Zhang G."/>
            <person name="Yuan T."/>
            <person name="Li M."/>
            <person name="Wang Z."/>
            <person name="Wang X."/>
            <person name="Cui S."/>
        </authorList>
    </citation>
    <scope>INTERACTION WITH LFR</scope>
</reference>
<dbReference type="EMBL" id="AF447887">
    <property type="protein sequence ID" value="AAL38032.1"/>
    <property type="molecule type" value="mRNA"/>
</dbReference>
<dbReference type="EMBL" id="AB080802">
    <property type="protein sequence ID" value="BAB88693.1"/>
    <property type="molecule type" value="mRNA"/>
</dbReference>
<dbReference type="EMBL" id="AB473833">
    <property type="protein sequence ID" value="BAH10544.1"/>
    <property type="molecule type" value="mRNA"/>
</dbReference>
<dbReference type="EMBL" id="AY519483">
    <property type="protein sequence ID" value="AAS00609.1"/>
    <property type="molecule type" value="Genomic_DNA"/>
</dbReference>
<dbReference type="EMBL" id="AC001229">
    <property type="protein sequence ID" value="AAB60912.1"/>
    <property type="molecule type" value="Genomic_DNA"/>
</dbReference>
<dbReference type="EMBL" id="CP002684">
    <property type="protein sequence ID" value="AEE34401.1"/>
    <property type="molecule type" value="Genomic_DNA"/>
</dbReference>
<dbReference type="EMBL" id="CP002684">
    <property type="protein sequence ID" value="AEE34402.1"/>
    <property type="molecule type" value="Genomic_DNA"/>
</dbReference>
<dbReference type="EMBL" id="CP002684">
    <property type="protein sequence ID" value="AEE34403.1"/>
    <property type="molecule type" value="Genomic_DNA"/>
</dbReference>
<dbReference type="EMBL" id="CP002684">
    <property type="protein sequence ID" value="AEE34404.1"/>
    <property type="molecule type" value="Genomic_DNA"/>
</dbReference>
<dbReference type="EMBL" id="CP002684">
    <property type="protein sequence ID" value="ANM57892.1"/>
    <property type="molecule type" value="Genomic_DNA"/>
</dbReference>
<dbReference type="EMBL" id="BT025163">
    <property type="protein sequence ID" value="ABE77401.1"/>
    <property type="molecule type" value="mRNA"/>
</dbReference>
<dbReference type="PIR" id="C96681">
    <property type="entry name" value="C96681"/>
</dbReference>
<dbReference type="RefSeq" id="NP_001077777.1">
    <property type="nucleotide sequence ID" value="NM_001084308.5"/>
</dbReference>
<dbReference type="RefSeq" id="NP_001077778.1">
    <property type="nucleotide sequence ID" value="NM_001084309.2"/>
</dbReference>
<dbReference type="RefSeq" id="NP_001117553.1">
    <property type="nucleotide sequence ID" value="NM_001124081.2"/>
</dbReference>
<dbReference type="RefSeq" id="NP_001320370.1">
    <property type="nucleotide sequence ID" value="NM_001334217.1"/>
</dbReference>
<dbReference type="RefSeq" id="NP_176739.1">
    <property type="nucleotide sequence ID" value="NM_105235.5"/>
</dbReference>
<dbReference type="SMR" id="O04479"/>
<dbReference type="BioGRID" id="28094">
    <property type="interactions" value="13"/>
</dbReference>
<dbReference type="FunCoup" id="O04479">
    <property type="interactions" value="92"/>
</dbReference>
<dbReference type="IntAct" id="O04479">
    <property type="interactions" value="14"/>
</dbReference>
<dbReference type="STRING" id="3702.O04479"/>
<dbReference type="PaxDb" id="3702-AT1G65620.1"/>
<dbReference type="ProteomicsDB" id="246912"/>
<dbReference type="EnsemblPlants" id="AT1G65620.1">
    <property type="protein sequence ID" value="AT1G65620.1"/>
    <property type="gene ID" value="AT1G65620"/>
</dbReference>
<dbReference type="EnsemblPlants" id="AT1G65620.2">
    <property type="protein sequence ID" value="AT1G65620.2"/>
    <property type="gene ID" value="AT1G65620"/>
</dbReference>
<dbReference type="EnsemblPlants" id="AT1G65620.3">
    <property type="protein sequence ID" value="AT1G65620.3"/>
    <property type="gene ID" value="AT1G65620"/>
</dbReference>
<dbReference type="EnsemblPlants" id="AT1G65620.4">
    <property type="protein sequence ID" value="AT1G65620.4"/>
    <property type="gene ID" value="AT1G65620"/>
</dbReference>
<dbReference type="EnsemblPlants" id="AT1G65620.5">
    <property type="protein sequence ID" value="AT1G65620.5"/>
    <property type="gene ID" value="AT1G65620"/>
</dbReference>
<dbReference type="GeneID" id="842873"/>
<dbReference type="Gramene" id="AT1G65620.1">
    <property type="protein sequence ID" value="AT1G65620.1"/>
    <property type="gene ID" value="AT1G65620"/>
</dbReference>
<dbReference type="Gramene" id="AT1G65620.2">
    <property type="protein sequence ID" value="AT1G65620.2"/>
    <property type="gene ID" value="AT1G65620"/>
</dbReference>
<dbReference type="Gramene" id="AT1G65620.3">
    <property type="protein sequence ID" value="AT1G65620.3"/>
    <property type="gene ID" value="AT1G65620"/>
</dbReference>
<dbReference type="Gramene" id="AT1G65620.4">
    <property type="protein sequence ID" value="AT1G65620.4"/>
    <property type="gene ID" value="AT1G65620"/>
</dbReference>
<dbReference type="Gramene" id="AT1G65620.5">
    <property type="protein sequence ID" value="AT1G65620.5"/>
    <property type="gene ID" value="AT1G65620"/>
</dbReference>
<dbReference type="KEGG" id="ath:AT1G65620"/>
<dbReference type="Araport" id="AT1G65620"/>
<dbReference type="TAIR" id="AT1G65620">
    <property type="gene designation" value="AS2"/>
</dbReference>
<dbReference type="eggNOG" id="ENOG502QV43">
    <property type="taxonomic scope" value="Eukaryota"/>
</dbReference>
<dbReference type="HOGENOM" id="CLU_058353_1_2_1"/>
<dbReference type="InParanoid" id="O04479"/>
<dbReference type="OMA" id="FDGGNNY"/>
<dbReference type="OrthoDB" id="2016447at2759"/>
<dbReference type="PhylomeDB" id="O04479"/>
<dbReference type="PRO" id="PR:O04479"/>
<dbReference type="Proteomes" id="UP000006548">
    <property type="component" value="Chromosome 1"/>
</dbReference>
<dbReference type="ExpressionAtlas" id="O04479">
    <property type="expression patterns" value="baseline and differential"/>
</dbReference>
<dbReference type="GO" id="GO:0005654">
    <property type="term" value="C:nucleoplasm"/>
    <property type="evidence" value="ECO:0000314"/>
    <property type="project" value="TAIR"/>
</dbReference>
<dbReference type="GO" id="GO:0005634">
    <property type="term" value="C:nucleus"/>
    <property type="evidence" value="ECO:0000314"/>
    <property type="project" value="TAIR"/>
</dbReference>
<dbReference type="GO" id="GO:0009943">
    <property type="term" value="P:adaxial/abaxial axis specification"/>
    <property type="evidence" value="ECO:0000315"/>
    <property type="project" value="TAIR"/>
</dbReference>
<dbReference type="GO" id="GO:0048441">
    <property type="term" value="P:petal development"/>
    <property type="evidence" value="ECO:0000316"/>
    <property type="project" value="TAIR"/>
</dbReference>
<dbReference type="GO" id="GO:0009944">
    <property type="term" value="P:polarity specification of adaxial/abaxial axis"/>
    <property type="evidence" value="ECO:0000315"/>
    <property type="project" value="TAIR"/>
</dbReference>
<dbReference type="GO" id="GO:0009954">
    <property type="term" value="P:proximal/distal pattern formation"/>
    <property type="evidence" value="ECO:0000316"/>
    <property type="project" value="TAIR"/>
</dbReference>
<dbReference type="GO" id="GO:0009799">
    <property type="term" value="P:specification of symmetry"/>
    <property type="evidence" value="ECO:0000315"/>
    <property type="project" value="TAIR"/>
</dbReference>
<dbReference type="InterPro" id="IPR004883">
    <property type="entry name" value="LOB"/>
</dbReference>
<dbReference type="PANTHER" id="PTHR31301">
    <property type="entry name" value="LOB DOMAIN-CONTAINING PROTEIN 4-RELATED"/>
    <property type="match status" value="1"/>
</dbReference>
<dbReference type="PANTHER" id="PTHR31301:SF83">
    <property type="entry name" value="PROTEIN ASYMMETRIC LEAVES 2"/>
    <property type="match status" value="1"/>
</dbReference>
<dbReference type="Pfam" id="PF03195">
    <property type="entry name" value="LOB"/>
    <property type="match status" value="1"/>
</dbReference>
<dbReference type="PROSITE" id="PS50891">
    <property type="entry name" value="LOB"/>
    <property type="match status" value="1"/>
</dbReference>
<organism>
    <name type="scientific">Arabidopsis thaliana</name>
    <name type="common">Mouse-ear cress</name>
    <dbReference type="NCBI Taxonomy" id="3702"/>
    <lineage>
        <taxon>Eukaryota</taxon>
        <taxon>Viridiplantae</taxon>
        <taxon>Streptophyta</taxon>
        <taxon>Embryophyta</taxon>
        <taxon>Tracheophyta</taxon>
        <taxon>Spermatophyta</taxon>
        <taxon>Magnoliopsida</taxon>
        <taxon>eudicotyledons</taxon>
        <taxon>Gunneridae</taxon>
        <taxon>Pentapetalae</taxon>
        <taxon>rosids</taxon>
        <taxon>malvids</taxon>
        <taxon>Brassicales</taxon>
        <taxon>Brassicaceae</taxon>
        <taxon>Camelineae</taxon>
        <taxon>Arabidopsis</taxon>
    </lineage>
</organism>
<proteinExistence type="evidence at protein level"/>
<protein>
    <recommendedName>
        <fullName evidence="16">Protein ASYMMETRIC LEAVES 2</fullName>
    </recommendedName>
    <alternativeName>
        <fullName evidence="17">LOB domain-containing protein 6</fullName>
    </alternativeName>
</protein>
<keyword id="KW-0217">Developmental protein</keyword>
<keyword id="KW-0539">Nucleus</keyword>
<keyword id="KW-1185">Reference proteome</keyword>
<keyword id="KW-0678">Repressor</keyword>
<keyword id="KW-0346">Stress response</keyword>